<protein>
    <recommendedName>
        <fullName evidence="1">Histidinol-phosphate aminotransferase</fullName>
        <ecNumber evidence="1">2.6.1.9</ecNumber>
    </recommendedName>
    <alternativeName>
        <fullName evidence="1">Imidazole acetol-phosphate transaminase</fullName>
    </alternativeName>
</protein>
<evidence type="ECO:0000255" key="1">
    <source>
        <dbReference type="HAMAP-Rule" id="MF_01023"/>
    </source>
</evidence>
<dbReference type="EC" id="2.6.1.9" evidence="1"/>
<dbReference type="EMBL" id="CP000387">
    <property type="protein sequence ID" value="ABN44842.1"/>
    <property type="molecule type" value="Genomic_DNA"/>
</dbReference>
<dbReference type="RefSeq" id="WP_011837142.1">
    <property type="nucleotide sequence ID" value="NC_009009.1"/>
</dbReference>
<dbReference type="RefSeq" id="YP_001035392.1">
    <property type="nucleotide sequence ID" value="NC_009009.1"/>
</dbReference>
<dbReference type="SMR" id="A3CNT7"/>
<dbReference type="STRING" id="388919.SSA_1449"/>
<dbReference type="KEGG" id="ssa:SSA_1449"/>
<dbReference type="PATRIC" id="fig|388919.9.peg.1374"/>
<dbReference type="eggNOG" id="COG0079">
    <property type="taxonomic scope" value="Bacteria"/>
</dbReference>
<dbReference type="HOGENOM" id="CLU_017584_3_0_9"/>
<dbReference type="OrthoDB" id="9813612at2"/>
<dbReference type="UniPathway" id="UPA00031">
    <property type="reaction ID" value="UER00012"/>
</dbReference>
<dbReference type="Proteomes" id="UP000002148">
    <property type="component" value="Chromosome"/>
</dbReference>
<dbReference type="GO" id="GO:0004400">
    <property type="term" value="F:histidinol-phosphate transaminase activity"/>
    <property type="evidence" value="ECO:0007669"/>
    <property type="project" value="UniProtKB-UniRule"/>
</dbReference>
<dbReference type="GO" id="GO:0030170">
    <property type="term" value="F:pyridoxal phosphate binding"/>
    <property type="evidence" value="ECO:0007669"/>
    <property type="project" value="InterPro"/>
</dbReference>
<dbReference type="GO" id="GO:0000105">
    <property type="term" value="P:L-histidine biosynthetic process"/>
    <property type="evidence" value="ECO:0007669"/>
    <property type="project" value="UniProtKB-UniRule"/>
</dbReference>
<dbReference type="CDD" id="cd00609">
    <property type="entry name" value="AAT_like"/>
    <property type="match status" value="1"/>
</dbReference>
<dbReference type="Gene3D" id="3.90.1150.10">
    <property type="entry name" value="Aspartate Aminotransferase, domain 1"/>
    <property type="match status" value="1"/>
</dbReference>
<dbReference type="Gene3D" id="3.40.640.10">
    <property type="entry name" value="Type I PLP-dependent aspartate aminotransferase-like (Major domain)"/>
    <property type="match status" value="1"/>
</dbReference>
<dbReference type="HAMAP" id="MF_01023">
    <property type="entry name" value="HisC_aminotrans_2"/>
    <property type="match status" value="1"/>
</dbReference>
<dbReference type="InterPro" id="IPR004839">
    <property type="entry name" value="Aminotransferase_I/II_large"/>
</dbReference>
<dbReference type="InterPro" id="IPR005861">
    <property type="entry name" value="HisP_aminotrans"/>
</dbReference>
<dbReference type="InterPro" id="IPR050106">
    <property type="entry name" value="HistidinolP_aminotransfase"/>
</dbReference>
<dbReference type="InterPro" id="IPR015424">
    <property type="entry name" value="PyrdxlP-dep_Trfase"/>
</dbReference>
<dbReference type="InterPro" id="IPR015421">
    <property type="entry name" value="PyrdxlP-dep_Trfase_major"/>
</dbReference>
<dbReference type="InterPro" id="IPR015422">
    <property type="entry name" value="PyrdxlP-dep_Trfase_small"/>
</dbReference>
<dbReference type="NCBIfam" id="TIGR01141">
    <property type="entry name" value="hisC"/>
    <property type="match status" value="1"/>
</dbReference>
<dbReference type="PANTHER" id="PTHR43643:SF3">
    <property type="entry name" value="HISTIDINOL-PHOSPHATE AMINOTRANSFERASE"/>
    <property type="match status" value="1"/>
</dbReference>
<dbReference type="PANTHER" id="PTHR43643">
    <property type="entry name" value="HISTIDINOL-PHOSPHATE AMINOTRANSFERASE 2"/>
    <property type="match status" value="1"/>
</dbReference>
<dbReference type="Pfam" id="PF00155">
    <property type="entry name" value="Aminotran_1_2"/>
    <property type="match status" value="1"/>
</dbReference>
<dbReference type="SUPFAM" id="SSF53383">
    <property type="entry name" value="PLP-dependent transferases"/>
    <property type="match status" value="1"/>
</dbReference>
<name>HIS8_STRSV</name>
<organism>
    <name type="scientific">Streptococcus sanguinis (strain SK36)</name>
    <dbReference type="NCBI Taxonomy" id="388919"/>
    <lineage>
        <taxon>Bacteria</taxon>
        <taxon>Bacillati</taxon>
        <taxon>Bacillota</taxon>
        <taxon>Bacilli</taxon>
        <taxon>Lactobacillales</taxon>
        <taxon>Streptococcaceae</taxon>
        <taxon>Streptococcus</taxon>
    </lineage>
</organism>
<gene>
    <name evidence="1" type="primary">hisC</name>
    <name type="ordered locus">SSA_1449</name>
</gene>
<sequence>MVKLKGLRQINPYVAGQQPNERDMIKLNTNENAYGPSPKVAEALQNFDDQELRKYSSLDQTELCQALAANLGVSPDQLIIGNGSDDILSMAFLAFFNSGESVLFPDLTYGFYKVWADLYHVPFREIPLTDDFEVHPSDYFGDNGGIILANPNAPTGIYLPLEQLEEILASNQDVVVVVDEAYIHFGGQSALPLLETYPNLFITRTFSKDAALAGLRVGYGLGHPDLIAVMKAVKDSINPYSVDLLAESLALAAVQDWDYYLETGRAIQETRDWFAGELAALDFQVLTSQTNFVLAQPSGISAAELFQQLEERRIYVRYFPKAERIKDFLRISIGRREEMETVLAAIEEICSS</sequence>
<feature type="chain" id="PRO_0000319789" description="Histidinol-phosphate aminotransferase">
    <location>
        <begin position="1"/>
        <end position="352"/>
    </location>
</feature>
<feature type="modified residue" description="N6-(pyridoxal phosphate)lysine" evidence="1">
    <location>
        <position position="208"/>
    </location>
</feature>
<comment type="catalytic activity">
    <reaction evidence="1">
        <text>L-histidinol phosphate + 2-oxoglutarate = 3-(imidazol-4-yl)-2-oxopropyl phosphate + L-glutamate</text>
        <dbReference type="Rhea" id="RHEA:23744"/>
        <dbReference type="ChEBI" id="CHEBI:16810"/>
        <dbReference type="ChEBI" id="CHEBI:29985"/>
        <dbReference type="ChEBI" id="CHEBI:57766"/>
        <dbReference type="ChEBI" id="CHEBI:57980"/>
        <dbReference type="EC" id="2.6.1.9"/>
    </reaction>
</comment>
<comment type="cofactor">
    <cofactor evidence="1">
        <name>pyridoxal 5'-phosphate</name>
        <dbReference type="ChEBI" id="CHEBI:597326"/>
    </cofactor>
</comment>
<comment type="pathway">
    <text evidence="1">Amino-acid biosynthesis; L-histidine biosynthesis; L-histidine from 5-phospho-alpha-D-ribose 1-diphosphate: step 7/9.</text>
</comment>
<comment type="subunit">
    <text evidence="1">Homodimer.</text>
</comment>
<comment type="similarity">
    <text evidence="1">Belongs to the class-II pyridoxal-phosphate-dependent aminotransferase family. Histidinol-phosphate aminotransferase subfamily.</text>
</comment>
<reference key="1">
    <citation type="journal article" date="2007" name="J. Bacteriol.">
        <title>Genome of the opportunistic pathogen Streptococcus sanguinis.</title>
        <authorList>
            <person name="Xu P."/>
            <person name="Alves J.M."/>
            <person name="Kitten T."/>
            <person name="Brown A."/>
            <person name="Chen Z."/>
            <person name="Ozaki L.S."/>
            <person name="Manque P."/>
            <person name="Ge X."/>
            <person name="Serrano M.G."/>
            <person name="Puiu D."/>
            <person name="Hendricks S."/>
            <person name="Wang Y."/>
            <person name="Chaplin M.D."/>
            <person name="Akan D."/>
            <person name="Paik S."/>
            <person name="Peterson D.L."/>
            <person name="Macrina F.L."/>
            <person name="Buck G.A."/>
        </authorList>
    </citation>
    <scope>NUCLEOTIDE SEQUENCE [LARGE SCALE GENOMIC DNA]</scope>
    <source>
        <strain>SK36</strain>
    </source>
</reference>
<keyword id="KW-0028">Amino-acid biosynthesis</keyword>
<keyword id="KW-0032">Aminotransferase</keyword>
<keyword id="KW-0368">Histidine biosynthesis</keyword>
<keyword id="KW-0663">Pyridoxal phosphate</keyword>
<keyword id="KW-1185">Reference proteome</keyword>
<keyword id="KW-0808">Transferase</keyword>
<accession>A3CNT7</accession>
<proteinExistence type="inferred from homology"/>